<gene>
    <name type="primary">yegX</name>
    <name type="ordered locus">c2629</name>
</gene>
<dbReference type="EMBL" id="AE014075">
    <property type="protein sequence ID" value="AAN81085.1"/>
    <property type="status" value="ALT_INIT"/>
    <property type="molecule type" value="Genomic_DNA"/>
</dbReference>
<dbReference type="RefSeq" id="WP_001339765.1">
    <property type="nucleotide sequence ID" value="NZ_CP051263.1"/>
</dbReference>
<dbReference type="SMR" id="Q8FFY2"/>
<dbReference type="STRING" id="199310.c2629"/>
<dbReference type="CAZy" id="GH25">
    <property type="family name" value="Glycoside Hydrolase Family 25"/>
</dbReference>
<dbReference type="KEGG" id="ecc:c2629"/>
<dbReference type="eggNOG" id="COG3757">
    <property type="taxonomic scope" value="Bacteria"/>
</dbReference>
<dbReference type="HOGENOM" id="CLU_044973_3_2_6"/>
<dbReference type="Proteomes" id="UP000001410">
    <property type="component" value="Chromosome"/>
</dbReference>
<dbReference type="GO" id="GO:0003796">
    <property type="term" value="F:lysozyme activity"/>
    <property type="evidence" value="ECO:0007669"/>
    <property type="project" value="InterPro"/>
</dbReference>
<dbReference type="GO" id="GO:0016052">
    <property type="term" value="P:carbohydrate catabolic process"/>
    <property type="evidence" value="ECO:0007669"/>
    <property type="project" value="TreeGrafter"/>
</dbReference>
<dbReference type="GO" id="GO:0016998">
    <property type="term" value="P:cell wall macromolecule catabolic process"/>
    <property type="evidence" value="ECO:0007669"/>
    <property type="project" value="InterPro"/>
</dbReference>
<dbReference type="GO" id="GO:0009253">
    <property type="term" value="P:peptidoglycan catabolic process"/>
    <property type="evidence" value="ECO:0007669"/>
    <property type="project" value="InterPro"/>
</dbReference>
<dbReference type="CDD" id="cd06524">
    <property type="entry name" value="GH25_YegX-like"/>
    <property type="match status" value="1"/>
</dbReference>
<dbReference type="Gene3D" id="3.20.20.80">
    <property type="entry name" value="Glycosidases"/>
    <property type="match status" value="1"/>
</dbReference>
<dbReference type="InterPro" id="IPR002053">
    <property type="entry name" value="Glyco_hydro_25"/>
</dbReference>
<dbReference type="InterPro" id="IPR008270">
    <property type="entry name" value="Glyco_hydro_25_AS"/>
</dbReference>
<dbReference type="InterPro" id="IPR018077">
    <property type="entry name" value="Glyco_hydro_fam25_subgr"/>
</dbReference>
<dbReference type="InterPro" id="IPR017853">
    <property type="entry name" value="Glycoside_hydrolase_SF"/>
</dbReference>
<dbReference type="PANTHER" id="PTHR34135">
    <property type="entry name" value="LYSOZYME"/>
    <property type="match status" value="1"/>
</dbReference>
<dbReference type="PANTHER" id="PTHR34135:SF2">
    <property type="entry name" value="LYSOZYME"/>
    <property type="match status" value="1"/>
</dbReference>
<dbReference type="Pfam" id="PF01183">
    <property type="entry name" value="Glyco_hydro_25"/>
    <property type="match status" value="1"/>
</dbReference>
<dbReference type="SMART" id="SM00641">
    <property type="entry name" value="Glyco_25"/>
    <property type="match status" value="1"/>
</dbReference>
<dbReference type="SUPFAM" id="SSF51445">
    <property type="entry name" value="(Trans)glycosidases"/>
    <property type="match status" value="1"/>
</dbReference>
<dbReference type="PROSITE" id="PS00953">
    <property type="entry name" value="GLYCOSYL_HYDROL_F25_1"/>
    <property type="match status" value="1"/>
</dbReference>
<dbReference type="PROSITE" id="PS51904">
    <property type="entry name" value="GLYCOSYL_HYDROL_F25_2"/>
    <property type="match status" value="1"/>
</dbReference>
<name>YEGX_ECOL6</name>
<accession>Q8FFY2</accession>
<protein>
    <recommendedName>
        <fullName>Uncharacterized protein YegX</fullName>
    </recommendedName>
</protein>
<feature type="chain" id="PRO_0000208267" description="Uncharacterized protein YegX">
    <location>
        <begin position="1"/>
        <end position="272"/>
    </location>
</feature>
<feature type="active site" evidence="1">
    <location>
        <position position="71"/>
    </location>
</feature>
<feature type="active site" evidence="1">
    <location>
        <position position="163"/>
    </location>
</feature>
<reference key="1">
    <citation type="journal article" date="2002" name="Proc. Natl. Acad. Sci. U.S.A.">
        <title>Extensive mosaic structure revealed by the complete genome sequence of uropathogenic Escherichia coli.</title>
        <authorList>
            <person name="Welch R.A."/>
            <person name="Burland V."/>
            <person name="Plunkett G. III"/>
            <person name="Redford P."/>
            <person name="Roesch P."/>
            <person name="Rasko D."/>
            <person name="Buckles E.L."/>
            <person name="Liou S.-R."/>
            <person name="Boutin A."/>
            <person name="Hackett J."/>
            <person name="Stroud D."/>
            <person name="Mayhew G.F."/>
            <person name="Rose D.J."/>
            <person name="Zhou S."/>
            <person name="Schwartz D.C."/>
            <person name="Perna N.T."/>
            <person name="Mobley H.L.T."/>
            <person name="Donnenberg M.S."/>
            <person name="Blattner F.R."/>
        </authorList>
    </citation>
    <scope>NUCLEOTIDE SEQUENCE [LARGE SCALE GENOMIC DNA]</scope>
    <source>
        <strain>CFT073 / ATCC 700928 / UPEC</strain>
    </source>
</reference>
<proteinExistence type="inferred from homology"/>
<sequence>MQLRITSRKKFTVLLCALGLISIVAIYPRQTVNFFYSTAIQIKDYIHFYGYRPVKSFAIRIPASYTIHGIDVSRWQERIDWQRVAKMRDNGIRLQFAFIKATEGEKLVDPYFSRNWQLSRENGLLRGAYHYFSPSVSASVQARLFLQTVDFSQGDFPAVLDVEERGKLSAKELRKRVSQWLKMVEKRTGKKPIIYSGAVFYHTNLAGYFNEYPWWVAHYYQRRPDNDGMAWRFWQHSDRGQVDGINGPVDFNVFNGTVEELQGFVDGIKETP</sequence>
<comment type="similarity">
    <text evidence="2">Belongs to the glycosyl hydrolase 25 family.</text>
</comment>
<comment type="sequence caution" evidence="2">
    <conflict type="erroneous initiation">
        <sequence resource="EMBL-CDS" id="AAN81085"/>
    </conflict>
</comment>
<keyword id="KW-0326">Glycosidase</keyword>
<keyword id="KW-0378">Hydrolase</keyword>
<keyword id="KW-1185">Reference proteome</keyword>
<evidence type="ECO:0000255" key="1">
    <source>
        <dbReference type="PROSITE-ProRule" id="PRU10065"/>
    </source>
</evidence>
<evidence type="ECO:0000305" key="2"/>
<organism>
    <name type="scientific">Escherichia coli O6:H1 (strain CFT073 / ATCC 700928 / UPEC)</name>
    <dbReference type="NCBI Taxonomy" id="199310"/>
    <lineage>
        <taxon>Bacteria</taxon>
        <taxon>Pseudomonadati</taxon>
        <taxon>Pseudomonadota</taxon>
        <taxon>Gammaproteobacteria</taxon>
        <taxon>Enterobacterales</taxon>
        <taxon>Enterobacteriaceae</taxon>
        <taxon>Escherichia</taxon>
    </lineage>
</organism>